<gene>
    <name evidence="1" type="primary">efp</name>
    <name type="ordered locus">Cagg_1054</name>
</gene>
<organism>
    <name type="scientific">Chloroflexus aggregans (strain MD-66 / DSM 9485)</name>
    <dbReference type="NCBI Taxonomy" id="326427"/>
    <lineage>
        <taxon>Bacteria</taxon>
        <taxon>Bacillati</taxon>
        <taxon>Chloroflexota</taxon>
        <taxon>Chloroflexia</taxon>
        <taxon>Chloroflexales</taxon>
        <taxon>Chloroflexineae</taxon>
        <taxon>Chloroflexaceae</taxon>
        <taxon>Chloroflexus</taxon>
    </lineage>
</organism>
<keyword id="KW-0963">Cytoplasm</keyword>
<keyword id="KW-0251">Elongation factor</keyword>
<keyword id="KW-0648">Protein biosynthesis</keyword>
<name>EFP_CHLAD</name>
<reference key="1">
    <citation type="submission" date="2008-12" db="EMBL/GenBank/DDBJ databases">
        <title>Complete sequence of Chloroflexus aggregans DSM 9485.</title>
        <authorList>
            <consortium name="US DOE Joint Genome Institute"/>
            <person name="Lucas S."/>
            <person name="Copeland A."/>
            <person name="Lapidus A."/>
            <person name="Glavina del Rio T."/>
            <person name="Dalin E."/>
            <person name="Tice H."/>
            <person name="Pitluck S."/>
            <person name="Foster B."/>
            <person name="Larimer F."/>
            <person name="Land M."/>
            <person name="Hauser L."/>
            <person name="Kyrpides N."/>
            <person name="Mikhailova N."/>
            <person name="Bryant D.A."/>
            <person name="Richardson P."/>
        </authorList>
    </citation>
    <scope>NUCLEOTIDE SEQUENCE [LARGE SCALE GENOMIC DNA]</scope>
    <source>
        <strain>MD-66 / DSM 9485</strain>
    </source>
</reference>
<sequence>MAAGTTSDLRNGIVIRYNNDLYQVVEFQHVAPGNWRAFVRMKLKSLTTGKVIEDRVRAGAEIDIVRIERRPMQYLYREGDSFVFMDNDTFDQIPVSAELVGDAVKFMKENETVDLVYDAEKDQIIGVELPIFVNLKVVETTVAVRGDTATNVTKPATLETGAVIEVPAFINEGDVLKIDTRTGEYITRV</sequence>
<comment type="function">
    <text evidence="1">Involved in peptide bond synthesis. Stimulates efficient translation and peptide-bond synthesis on native or reconstituted 70S ribosomes in vitro. Probably functions indirectly by altering the affinity of the ribosome for aminoacyl-tRNA, thus increasing their reactivity as acceptors for peptidyl transferase.</text>
</comment>
<comment type="pathway">
    <text evidence="1">Protein biosynthesis; polypeptide chain elongation.</text>
</comment>
<comment type="subcellular location">
    <subcellularLocation>
        <location evidence="1">Cytoplasm</location>
    </subcellularLocation>
</comment>
<comment type="similarity">
    <text evidence="1">Belongs to the elongation factor P family.</text>
</comment>
<evidence type="ECO:0000255" key="1">
    <source>
        <dbReference type="HAMAP-Rule" id="MF_00141"/>
    </source>
</evidence>
<protein>
    <recommendedName>
        <fullName evidence="1">Elongation factor P</fullName>
        <shortName evidence="1">EF-P</shortName>
    </recommendedName>
</protein>
<feature type="chain" id="PRO_1000122999" description="Elongation factor P">
    <location>
        <begin position="1"/>
        <end position="189"/>
    </location>
</feature>
<proteinExistence type="inferred from homology"/>
<accession>B8G711</accession>
<dbReference type="EMBL" id="CP001337">
    <property type="protein sequence ID" value="ACL23968.1"/>
    <property type="molecule type" value="Genomic_DNA"/>
</dbReference>
<dbReference type="RefSeq" id="WP_012616332.1">
    <property type="nucleotide sequence ID" value="NC_011831.1"/>
</dbReference>
<dbReference type="SMR" id="B8G711"/>
<dbReference type="STRING" id="326427.Cagg_1054"/>
<dbReference type="KEGG" id="cag:Cagg_1054"/>
<dbReference type="eggNOG" id="COG0231">
    <property type="taxonomic scope" value="Bacteria"/>
</dbReference>
<dbReference type="HOGENOM" id="CLU_074944_0_1_0"/>
<dbReference type="OrthoDB" id="9801844at2"/>
<dbReference type="UniPathway" id="UPA00345"/>
<dbReference type="Proteomes" id="UP000002508">
    <property type="component" value="Chromosome"/>
</dbReference>
<dbReference type="GO" id="GO:0005737">
    <property type="term" value="C:cytoplasm"/>
    <property type="evidence" value="ECO:0007669"/>
    <property type="project" value="UniProtKB-SubCell"/>
</dbReference>
<dbReference type="GO" id="GO:0003746">
    <property type="term" value="F:translation elongation factor activity"/>
    <property type="evidence" value="ECO:0007669"/>
    <property type="project" value="UniProtKB-UniRule"/>
</dbReference>
<dbReference type="GO" id="GO:0043043">
    <property type="term" value="P:peptide biosynthetic process"/>
    <property type="evidence" value="ECO:0007669"/>
    <property type="project" value="InterPro"/>
</dbReference>
<dbReference type="CDD" id="cd04470">
    <property type="entry name" value="S1_EF-P_repeat_1"/>
    <property type="match status" value="1"/>
</dbReference>
<dbReference type="CDD" id="cd05794">
    <property type="entry name" value="S1_EF-P_repeat_2"/>
    <property type="match status" value="1"/>
</dbReference>
<dbReference type="FunFam" id="2.30.30.30:FF:000003">
    <property type="entry name" value="Elongation factor P"/>
    <property type="match status" value="1"/>
</dbReference>
<dbReference type="FunFam" id="2.40.50.140:FF:000004">
    <property type="entry name" value="Elongation factor P"/>
    <property type="match status" value="1"/>
</dbReference>
<dbReference type="FunFam" id="2.40.50.140:FF:000009">
    <property type="entry name" value="Elongation factor P"/>
    <property type="match status" value="1"/>
</dbReference>
<dbReference type="Gene3D" id="2.30.30.30">
    <property type="match status" value="1"/>
</dbReference>
<dbReference type="Gene3D" id="2.40.50.140">
    <property type="entry name" value="Nucleic acid-binding proteins"/>
    <property type="match status" value="2"/>
</dbReference>
<dbReference type="HAMAP" id="MF_00141">
    <property type="entry name" value="EF_P"/>
    <property type="match status" value="1"/>
</dbReference>
<dbReference type="InterPro" id="IPR015365">
    <property type="entry name" value="Elong-fact-P_C"/>
</dbReference>
<dbReference type="InterPro" id="IPR012340">
    <property type="entry name" value="NA-bd_OB-fold"/>
</dbReference>
<dbReference type="InterPro" id="IPR014722">
    <property type="entry name" value="Rib_uL2_dom2"/>
</dbReference>
<dbReference type="InterPro" id="IPR020599">
    <property type="entry name" value="Transl_elong_fac_P/YeiP"/>
</dbReference>
<dbReference type="InterPro" id="IPR013185">
    <property type="entry name" value="Transl_elong_KOW-like"/>
</dbReference>
<dbReference type="InterPro" id="IPR001059">
    <property type="entry name" value="Transl_elong_P/YeiP_cen"/>
</dbReference>
<dbReference type="InterPro" id="IPR013852">
    <property type="entry name" value="Transl_elong_P/YeiP_CS"/>
</dbReference>
<dbReference type="InterPro" id="IPR011768">
    <property type="entry name" value="Transl_elongation_fac_P"/>
</dbReference>
<dbReference type="InterPro" id="IPR008991">
    <property type="entry name" value="Translation_prot_SH3-like_sf"/>
</dbReference>
<dbReference type="NCBIfam" id="TIGR00038">
    <property type="entry name" value="efp"/>
    <property type="match status" value="1"/>
</dbReference>
<dbReference type="NCBIfam" id="NF001810">
    <property type="entry name" value="PRK00529.1"/>
    <property type="match status" value="1"/>
</dbReference>
<dbReference type="PANTHER" id="PTHR30053">
    <property type="entry name" value="ELONGATION FACTOR P"/>
    <property type="match status" value="1"/>
</dbReference>
<dbReference type="PANTHER" id="PTHR30053:SF12">
    <property type="entry name" value="ELONGATION FACTOR P (EF-P) FAMILY PROTEIN"/>
    <property type="match status" value="1"/>
</dbReference>
<dbReference type="Pfam" id="PF01132">
    <property type="entry name" value="EFP"/>
    <property type="match status" value="1"/>
</dbReference>
<dbReference type="Pfam" id="PF08207">
    <property type="entry name" value="EFP_N"/>
    <property type="match status" value="1"/>
</dbReference>
<dbReference type="Pfam" id="PF09285">
    <property type="entry name" value="Elong-fact-P_C"/>
    <property type="match status" value="1"/>
</dbReference>
<dbReference type="PIRSF" id="PIRSF005901">
    <property type="entry name" value="EF-P"/>
    <property type="match status" value="1"/>
</dbReference>
<dbReference type="SMART" id="SM01185">
    <property type="entry name" value="EFP"/>
    <property type="match status" value="1"/>
</dbReference>
<dbReference type="SMART" id="SM00841">
    <property type="entry name" value="Elong-fact-P_C"/>
    <property type="match status" value="1"/>
</dbReference>
<dbReference type="SUPFAM" id="SSF50249">
    <property type="entry name" value="Nucleic acid-binding proteins"/>
    <property type="match status" value="2"/>
</dbReference>
<dbReference type="SUPFAM" id="SSF50104">
    <property type="entry name" value="Translation proteins SH3-like domain"/>
    <property type="match status" value="1"/>
</dbReference>
<dbReference type="PROSITE" id="PS01275">
    <property type="entry name" value="EFP"/>
    <property type="match status" value="1"/>
</dbReference>